<dbReference type="EC" id="2.7.4.3" evidence="1"/>
<dbReference type="EMBL" id="DS027688">
    <property type="protein sequence ID" value="EAW23021.1"/>
    <property type="molecule type" value="Genomic_DNA"/>
</dbReference>
<dbReference type="RefSeq" id="XP_001264918.1">
    <property type="nucleotide sequence ID" value="XM_001264917.1"/>
</dbReference>
<dbReference type="SMR" id="A1D3M8"/>
<dbReference type="STRING" id="331117.A1D3M8"/>
<dbReference type="EnsemblFungi" id="EAW23021">
    <property type="protein sequence ID" value="EAW23021"/>
    <property type="gene ID" value="NFIA_017220"/>
</dbReference>
<dbReference type="GeneID" id="4592123"/>
<dbReference type="KEGG" id="nfi:NFIA_017220"/>
<dbReference type="VEuPathDB" id="FungiDB:NFIA_017220"/>
<dbReference type="eggNOG" id="KOG3078">
    <property type="taxonomic scope" value="Eukaryota"/>
</dbReference>
<dbReference type="HOGENOM" id="CLU_032354_1_0_1"/>
<dbReference type="OMA" id="VYHEQTA"/>
<dbReference type="OrthoDB" id="439792at2759"/>
<dbReference type="Proteomes" id="UP000006702">
    <property type="component" value="Unassembled WGS sequence"/>
</dbReference>
<dbReference type="GO" id="GO:0005829">
    <property type="term" value="C:cytosol"/>
    <property type="evidence" value="ECO:0007669"/>
    <property type="project" value="UniProtKB-SubCell"/>
</dbReference>
<dbReference type="GO" id="GO:0005758">
    <property type="term" value="C:mitochondrial intermembrane space"/>
    <property type="evidence" value="ECO:0007669"/>
    <property type="project" value="UniProtKB-SubCell"/>
</dbReference>
<dbReference type="GO" id="GO:0004017">
    <property type="term" value="F:adenylate kinase activity"/>
    <property type="evidence" value="ECO:0007669"/>
    <property type="project" value="UniProtKB-UniRule"/>
</dbReference>
<dbReference type="GO" id="GO:0016208">
    <property type="term" value="F:AMP binding"/>
    <property type="evidence" value="ECO:0007669"/>
    <property type="project" value="EnsemblFungi"/>
</dbReference>
<dbReference type="GO" id="GO:0005524">
    <property type="term" value="F:ATP binding"/>
    <property type="evidence" value="ECO:0007669"/>
    <property type="project" value="UniProtKB-KW"/>
</dbReference>
<dbReference type="GO" id="GO:0003688">
    <property type="term" value="F:DNA replication origin binding"/>
    <property type="evidence" value="ECO:0007669"/>
    <property type="project" value="EnsemblFungi"/>
</dbReference>
<dbReference type="GO" id="GO:0006172">
    <property type="term" value="P:ADP biosynthetic process"/>
    <property type="evidence" value="ECO:0007669"/>
    <property type="project" value="UniProtKB-UniRule"/>
</dbReference>
<dbReference type="GO" id="GO:0046033">
    <property type="term" value="P:AMP metabolic process"/>
    <property type="evidence" value="ECO:0007669"/>
    <property type="project" value="UniProtKB-UniRule"/>
</dbReference>
<dbReference type="GO" id="GO:0046034">
    <property type="term" value="P:ATP metabolic process"/>
    <property type="evidence" value="ECO:0007669"/>
    <property type="project" value="UniProtKB-UniRule"/>
</dbReference>
<dbReference type="GO" id="GO:0006270">
    <property type="term" value="P:DNA replication initiation"/>
    <property type="evidence" value="ECO:0007669"/>
    <property type="project" value="EnsemblFungi"/>
</dbReference>
<dbReference type="GO" id="GO:0036388">
    <property type="term" value="P:pre-replicative complex assembly"/>
    <property type="evidence" value="ECO:0007669"/>
    <property type="project" value="EnsemblFungi"/>
</dbReference>
<dbReference type="CDD" id="cd01428">
    <property type="entry name" value="ADK"/>
    <property type="match status" value="1"/>
</dbReference>
<dbReference type="FunFam" id="3.40.50.300:FF:000106">
    <property type="entry name" value="Adenylate kinase mitochondrial"/>
    <property type="match status" value="1"/>
</dbReference>
<dbReference type="Gene3D" id="3.40.50.300">
    <property type="entry name" value="P-loop containing nucleotide triphosphate hydrolases"/>
    <property type="match status" value="1"/>
</dbReference>
<dbReference type="HAMAP" id="MF_00235">
    <property type="entry name" value="Adenylate_kinase_Adk"/>
    <property type="match status" value="1"/>
</dbReference>
<dbReference type="HAMAP" id="MF_03168">
    <property type="entry name" value="Adenylate_kinase_AK2"/>
    <property type="match status" value="1"/>
</dbReference>
<dbReference type="InterPro" id="IPR006259">
    <property type="entry name" value="Adenyl_kin_sub"/>
</dbReference>
<dbReference type="InterPro" id="IPR000850">
    <property type="entry name" value="Adenylat/UMP-CMP_kin"/>
</dbReference>
<dbReference type="InterPro" id="IPR033690">
    <property type="entry name" value="Adenylat_kinase_CS"/>
</dbReference>
<dbReference type="InterPro" id="IPR007862">
    <property type="entry name" value="Adenylate_kinase_lid-dom"/>
</dbReference>
<dbReference type="InterPro" id="IPR028587">
    <property type="entry name" value="AK2"/>
</dbReference>
<dbReference type="InterPro" id="IPR027417">
    <property type="entry name" value="P-loop_NTPase"/>
</dbReference>
<dbReference type="NCBIfam" id="TIGR01351">
    <property type="entry name" value="adk"/>
    <property type="match status" value="1"/>
</dbReference>
<dbReference type="NCBIfam" id="NF001380">
    <property type="entry name" value="PRK00279.1-2"/>
    <property type="match status" value="1"/>
</dbReference>
<dbReference type="NCBIfam" id="NF001381">
    <property type="entry name" value="PRK00279.1-3"/>
    <property type="match status" value="1"/>
</dbReference>
<dbReference type="NCBIfam" id="NF011100">
    <property type="entry name" value="PRK14527.1"/>
    <property type="match status" value="1"/>
</dbReference>
<dbReference type="PANTHER" id="PTHR23359">
    <property type="entry name" value="NUCLEOTIDE KINASE"/>
    <property type="match status" value="1"/>
</dbReference>
<dbReference type="Pfam" id="PF00406">
    <property type="entry name" value="ADK"/>
    <property type="match status" value="1"/>
</dbReference>
<dbReference type="Pfam" id="PF05191">
    <property type="entry name" value="ADK_lid"/>
    <property type="match status" value="1"/>
</dbReference>
<dbReference type="PRINTS" id="PR00094">
    <property type="entry name" value="ADENYLTKNASE"/>
</dbReference>
<dbReference type="SUPFAM" id="SSF52540">
    <property type="entry name" value="P-loop containing nucleoside triphosphate hydrolases"/>
    <property type="match status" value="1"/>
</dbReference>
<dbReference type="PROSITE" id="PS00113">
    <property type="entry name" value="ADENYLATE_KINASE"/>
    <property type="match status" value="1"/>
</dbReference>
<proteinExistence type="inferred from homology"/>
<accession>A1D3M8</accession>
<comment type="function">
    <text evidence="1">Catalyzes the reversible transfer of the terminal phosphate group between ATP and AMP. Plays an important role in cellular energy homeostasis and in adenine nucleotide metabolism. Adenylate kinase activity is critical for regulation of the phosphate utilization and the AMP de novo biosynthesis pathways.</text>
</comment>
<comment type="catalytic activity">
    <reaction evidence="1">
        <text>AMP + ATP = 2 ADP</text>
        <dbReference type="Rhea" id="RHEA:12973"/>
        <dbReference type="ChEBI" id="CHEBI:30616"/>
        <dbReference type="ChEBI" id="CHEBI:456215"/>
        <dbReference type="ChEBI" id="CHEBI:456216"/>
        <dbReference type="EC" id="2.7.4.3"/>
    </reaction>
</comment>
<comment type="subunit">
    <text evidence="1">Monomer.</text>
</comment>
<comment type="subcellular location">
    <subcellularLocation>
        <location evidence="1">Cytoplasm</location>
        <location evidence="1">Cytosol</location>
    </subcellularLocation>
    <subcellularLocation>
        <location evidence="1">Mitochondrion intermembrane space</location>
    </subcellularLocation>
    <text evidence="1">Predominantly mitochondrial.</text>
</comment>
<comment type="domain">
    <text evidence="1">Consists of three domains, a large central CORE domain and two small peripheral domains, NMPbind and LID, which undergo movements during catalysis. The LID domain closes over the site of phosphoryl transfer upon ATP binding. Assembling and dissambling the active center during each catalytic cycle provides an effective means to prevent ATP hydrolysis.</text>
</comment>
<comment type="similarity">
    <text evidence="1">Belongs to the adenylate kinase family. AK2 subfamily.</text>
</comment>
<name>KAD2_NEOFI</name>
<keyword id="KW-0067">ATP-binding</keyword>
<keyword id="KW-0963">Cytoplasm</keyword>
<keyword id="KW-0418">Kinase</keyword>
<keyword id="KW-0496">Mitochondrion</keyword>
<keyword id="KW-0547">Nucleotide-binding</keyword>
<keyword id="KW-1185">Reference proteome</keyword>
<keyword id="KW-0808">Transferase</keyword>
<evidence type="ECO:0000255" key="1">
    <source>
        <dbReference type="HAMAP-Rule" id="MF_03168"/>
    </source>
</evidence>
<protein>
    <recommendedName>
        <fullName evidence="1">Adenylate kinase</fullName>
        <ecNumber evidence="1">2.7.4.3</ecNumber>
    </recommendedName>
    <alternativeName>
        <fullName evidence="1">ATP-AMP transphosphorylase</fullName>
    </alternativeName>
    <alternativeName>
        <fullName evidence="1">ATP:AMP phosphotransferase</fullName>
    </alternativeName>
    <alternativeName>
        <fullName evidence="1">Adenylate kinase cytosolic and mitochondrial</fullName>
    </alternativeName>
    <alternativeName>
        <fullName evidence="1">Adenylate monophosphate kinase</fullName>
    </alternativeName>
</protein>
<feature type="chain" id="PRO_0000365680" description="Adenylate kinase">
    <location>
        <begin position="1"/>
        <end position="257"/>
    </location>
</feature>
<feature type="region of interest" description="NMP" evidence="1">
    <location>
        <begin position="72"/>
        <end position="101"/>
    </location>
</feature>
<feature type="region of interest" description="LID" evidence="1">
    <location>
        <begin position="169"/>
        <end position="206"/>
    </location>
</feature>
<feature type="binding site" evidence="1">
    <location>
        <begin position="52"/>
        <end position="57"/>
    </location>
    <ligand>
        <name>ATP</name>
        <dbReference type="ChEBI" id="CHEBI:30616"/>
    </ligand>
</feature>
<feature type="binding site" evidence="1">
    <location>
        <position position="73"/>
    </location>
    <ligand>
        <name>AMP</name>
        <dbReference type="ChEBI" id="CHEBI:456215"/>
    </ligand>
</feature>
<feature type="binding site" evidence="1">
    <location>
        <position position="78"/>
    </location>
    <ligand>
        <name>AMP</name>
        <dbReference type="ChEBI" id="CHEBI:456215"/>
    </ligand>
</feature>
<feature type="binding site" evidence="1">
    <location>
        <begin position="99"/>
        <end position="101"/>
    </location>
    <ligand>
        <name>AMP</name>
        <dbReference type="ChEBI" id="CHEBI:456215"/>
    </ligand>
</feature>
<feature type="binding site" evidence="1">
    <location>
        <begin position="128"/>
        <end position="131"/>
    </location>
    <ligand>
        <name>AMP</name>
        <dbReference type="ChEBI" id="CHEBI:456215"/>
    </ligand>
</feature>
<feature type="binding site" evidence="1">
    <location>
        <position position="135"/>
    </location>
    <ligand>
        <name>AMP</name>
        <dbReference type="ChEBI" id="CHEBI:456215"/>
    </ligand>
</feature>
<feature type="binding site" evidence="1">
    <location>
        <position position="170"/>
    </location>
    <ligand>
        <name>ATP</name>
        <dbReference type="ChEBI" id="CHEBI:30616"/>
    </ligand>
</feature>
<feature type="binding site" evidence="1">
    <location>
        <begin position="179"/>
        <end position="180"/>
    </location>
    <ligand>
        <name>ATP</name>
        <dbReference type="ChEBI" id="CHEBI:30616"/>
    </ligand>
</feature>
<feature type="binding site" evidence="1">
    <location>
        <position position="203"/>
    </location>
    <ligand>
        <name>AMP</name>
        <dbReference type="ChEBI" id="CHEBI:456215"/>
    </ligand>
</feature>
<feature type="binding site" evidence="1">
    <location>
        <position position="214"/>
    </location>
    <ligand>
        <name>AMP</name>
        <dbReference type="ChEBI" id="CHEBI:456215"/>
    </ligand>
</feature>
<feature type="binding site" evidence="1">
    <location>
        <position position="242"/>
    </location>
    <ligand>
        <name>ATP</name>
        <dbReference type="ChEBI" id="CHEBI:30616"/>
    </ligand>
</feature>
<gene>
    <name type="primary">adk1</name>
    <name type="ORF">NFIA_017220</name>
</gene>
<reference key="1">
    <citation type="journal article" date="2008" name="PLoS Genet.">
        <title>Genomic islands in the pathogenic filamentous fungus Aspergillus fumigatus.</title>
        <authorList>
            <person name="Fedorova N.D."/>
            <person name="Khaldi N."/>
            <person name="Joardar V.S."/>
            <person name="Maiti R."/>
            <person name="Amedeo P."/>
            <person name="Anderson M.J."/>
            <person name="Crabtree J."/>
            <person name="Silva J.C."/>
            <person name="Badger J.H."/>
            <person name="Albarraq A."/>
            <person name="Angiuoli S."/>
            <person name="Bussey H."/>
            <person name="Bowyer P."/>
            <person name="Cotty P.J."/>
            <person name="Dyer P.S."/>
            <person name="Egan A."/>
            <person name="Galens K."/>
            <person name="Fraser-Liggett C.M."/>
            <person name="Haas B.J."/>
            <person name="Inman J.M."/>
            <person name="Kent R."/>
            <person name="Lemieux S."/>
            <person name="Malavazi I."/>
            <person name="Orvis J."/>
            <person name="Roemer T."/>
            <person name="Ronning C.M."/>
            <person name="Sundaram J.P."/>
            <person name="Sutton G."/>
            <person name="Turner G."/>
            <person name="Venter J.C."/>
            <person name="White O.R."/>
            <person name="Whitty B.R."/>
            <person name="Youngman P."/>
            <person name="Wolfe K.H."/>
            <person name="Goldman G.H."/>
            <person name="Wortman J.R."/>
            <person name="Jiang B."/>
            <person name="Denning D.W."/>
            <person name="Nierman W.C."/>
        </authorList>
    </citation>
    <scope>NUCLEOTIDE SEQUENCE [LARGE SCALE GENOMIC DNA]</scope>
    <source>
        <strain>ATCC 1020 / DSM 3700 / CBS 544.65 / FGSC A1164 / JCM 1740 / NRRL 181 / WB 181</strain>
    </source>
</reference>
<organism>
    <name type="scientific">Neosartorya fischeri (strain ATCC 1020 / DSM 3700 / CBS 544.65 / FGSC A1164 / JCM 1740 / NRRL 181 / WB 181)</name>
    <name type="common">Aspergillus fischerianus</name>
    <dbReference type="NCBI Taxonomy" id="331117"/>
    <lineage>
        <taxon>Eukaryota</taxon>
        <taxon>Fungi</taxon>
        <taxon>Dikarya</taxon>
        <taxon>Ascomycota</taxon>
        <taxon>Pezizomycotina</taxon>
        <taxon>Eurotiomycetes</taxon>
        <taxon>Eurotiomycetidae</taxon>
        <taxon>Eurotiales</taxon>
        <taxon>Aspergillaceae</taxon>
        <taxon>Aspergillus</taxon>
        <taxon>Aspergillus subgen. Fumigati</taxon>
    </lineage>
</organism>
<sequence>MAPITEEVVHGLKDMIEKLENRVQELEGRLGGESKPKSIAEQMRIVLMGPPGAGKGTQAPRLKEKYCVCHLATGDMLRSQVAKKTELGKEAKKIMDQGGLVSDEIMVNMIKNELDTNTECKNGFILDGFPRTVAQAERLDDMLEARKQKLQHAIELQIDDALLVARITGRLVHPASGRSYHKIFNPPKNDMKDDVTGEPLIQRSDDNAETLKKRLSTYHAQTAPVVEYYKKTGIWRGIDASQEPGQVWKSLLGVFQK</sequence>